<evidence type="ECO:0000250" key="1">
    <source>
        <dbReference type="UniProtKB" id="Q9NPB0"/>
    </source>
</evidence>
<evidence type="ECO:0000256" key="2">
    <source>
        <dbReference type="SAM" id="MobiDB-lite"/>
    </source>
</evidence>
<evidence type="ECO:0000269" key="3">
    <source>
    </source>
</evidence>
<evidence type="ECO:0000303" key="4">
    <source>
    </source>
</evidence>
<evidence type="ECO:0000305" key="5"/>
<evidence type="ECO:0000312" key="6">
    <source>
        <dbReference type="MGI" id="MGI:1914759"/>
    </source>
</evidence>
<gene>
    <name evidence="4 6" type="primary">Saysd1</name>
</gene>
<dbReference type="EMBL" id="BC027644">
    <property type="protein sequence ID" value="AAH27644.1"/>
    <property type="molecule type" value="mRNA"/>
</dbReference>
<dbReference type="CCDS" id="CCDS49406.1"/>
<dbReference type="RefSeq" id="NP_080485.1">
    <property type="nucleotide sequence ID" value="NM_026209.1"/>
</dbReference>
<dbReference type="SMR" id="Q8K190"/>
<dbReference type="BioGRID" id="212237">
    <property type="interactions" value="3"/>
</dbReference>
<dbReference type="FunCoup" id="Q8K190">
    <property type="interactions" value="2132"/>
</dbReference>
<dbReference type="STRING" id="10090.ENSMUSP00000055382"/>
<dbReference type="GlyGen" id="Q8K190">
    <property type="glycosylation" value="1 site, 1 N-linked glycan (1 site)"/>
</dbReference>
<dbReference type="iPTMnet" id="Q8K190"/>
<dbReference type="PhosphoSitePlus" id="Q8K190"/>
<dbReference type="SwissPalm" id="Q8K190"/>
<dbReference type="jPOST" id="Q8K190"/>
<dbReference type="PaxDb" id="10090-ENSMUSP00000055382"/>
<dbReference type="PeptideAtlas" id="Q8K190"/>
<dbReference type="ProteomicsDB" id="257521"/>
<dbReference type="Pumba" id="Q8K190"/>
<dbReference type="Antibodypedia" id="2340">
    <property type="antibodies" value="109 antibodies from 16 providers"/>
</dbReference>
<dbReference type="Ensembl" id="ENSMUST00000059666.6">
    <property type="protein sequence ID" value="ENSMUSP00000055382.5"/>
    <property type="gene ID" value="ENSMUSG00000045107.6"/>
</dbReference>
<dbReference type="GeneID" id="67509"/>
<dbReference type="KEGG" id="mmu:67509"/>
<dbReference type="UCSC" id="uc007siy.2">
    <property type="organism name" value="mouse"/>
</dbReference>
<dbReference type="AGR" id="MGI:1914759"/>
<dbReference type="CTD" id="55776"/>
<dbReference type="MGI" id="MGI:1914759">
    <property type="gene designation" value="Saysd1"/>
</dbReference>
<dbReference type="VEuPathDB" id="HostDB:ENSMUSG00000045107"/>
<dbReference type="eggNOG" id="KOG3249">
    <property type="taxonomic scope" value="Eukaryota"/>
</dbReference>
<dbReference type="GeneTree" id="ENSGT00390000004313"/>
<dbReference type="HOGENOM" id="CLU_114258_0_0_1"/>
<dbReference type="InParanoid" id="Q8K190"/>
<dbReference type="OMA" id="LPWWTHY"/>
<dbReference type="OrthoDB" id="71310at2759"/>
<dbReference type="PhylomeDB" id="Q8K190"/>
<dbReference type="TreeFam" id="TF106140"/>
<dbReference type="BioGRID-ORCS" id="67509">
    <property type="hits" value="1 hit in 77 CRISPR screens"/>
</dbReference>
<dbReference type="ChiTaRS" id="Saysd1">
    <property type="organism name" value="mouse"/>
</dbReference>
<dbReference type="PRO" id="PR:Q8K190"/>
<dbReference type="Proteomes" id="UP000000589">
    <property type="component" value="Chromosome 14"/>
</dbReference>
<dbReference type="RNAct" id="Q8K190">
    <property type="molecule type" value="protein"/>
</dbReference>
<dbReference type="Bgee" id="ENSMUSG00000045107">
    <property type="expression patterns" value="Expressed in seminiferous tubule of testis and 233 other cell types or tissues"/>
</dbReference>
<dbReference type="GO" id="GO:0030659">
    <property type="term" value="C:cytoplasmic vesicle membrane"/>
    <property type="evidence" value="ECO:0007669"/>
    <property type="project" value="UniProtKB-SubCell"/>
</dbReference>
<dbReference type="GO" id="GO:0005783">
    <property type="term" value="C:endoplasmic reticulum"/>
    <property type="evidence" value="ECO:0000314"/>
    <property type="project" value="UniProtKB"/>
</dbReference>
<dbReference type="GO" id="GO:0005789">
    <property type="term" value="C:endoplasmic reticulum membrane"/>
    <property type="evidence" value="ECO:0007669"/>
    <property type="project" value="UniProtKB-SubCell"/>
</dbReference>
<dbReference type="GO" id="GO:0141185">
    <property type="term" value="F:UFM1-modified protein reader activity"/>
    <property type="evidence" value="ECO:0000250"/>
    <property type="project" value="UniProtKB"/>
</dbReference>
<dbReference type="GO" id="GO:0006515">
    <property type="term" value="P:protein quality control for misfolded or incompletely synthesized proteins"/>
    <property type="evidence" value="ECO:0000250"/>
    <property type="project" value="UniProtKB"/>
</dbReference>
<dbReference type="GO" id="GO:0072344">
    <property type="term" value="P:rescue of stalled ribosome"/>
    <property type="evidence" value="ECO:0000250"/>
    <property type="project" value="UniProtKB"/>
</dbReference>
<dbReference type="InterPro" id="IPR039159">
    <property type="entry name" value="SAYSD1"/>
</dbReference>
<dbReference type="InterPro" id="IPR019387">
    <property type="entry name" value="SAYSvFN_dom"/>
</dbReference>
<dbReference type="PANTHER" id="PTHR13527">
    <property type="entry name" value="SAYSVFN DOMAIN-CONTAINING PROTEIN 1"/>
    <property type="match status" value="1"/>
</dbReference>
<dbReference type="PANTHER" id="PTHR13527:SF0">
    <property type="entry name" value="SAYSVFN DOMAIN-CONTAINING PROTEIN 1"/>
    <property type="match status" value="1"/>
</dbReference>
<dbReference type="Pfam" id="PF10260">
    <property type="entry name" value="SAYSvFN"/>
    <property type="match status" value="1"/>
</dbReference>
<reference key="1">
    <citation type="journal article" date="2004" name="Genome Res.">
        <title>The status, quality, and expansion of the NIH full-length cDNA project: the Mammalian Gene Collection (MGC).</title>
        <authorList>
            <consortium name="The MGC Project Team"/>
        </authorList>
    </citation>
    <scope>NUCLEOTIDE SEQUENCE [LARGE SCALE MRNA]</scope>
    <source>
        <tissue>Mammary gland</tissue>
    </source>
</reference>
<reference key="2">
    <citation type="journal article" date="2010" name="Cell">
        <title>A tissue-specific atlas of mouse protein phosphorylation and expression.</title>
        <authorList>
            <person name="Huttlin E.L."/>
            <person name="Jedrychowski M.P."/>
            <person name="Elias J.E."/>
            <person name="Goswami T."/>
            <person name="Rad R."/>
            <person name="Beausoleil S.A."/>
            <person name="Villen J."/>
            <person name="Haas W."/>
            <person name="Sowa M.E."/>
            <person name="Gygi S.P."/>
        </authorList>
    </citation>
    <scope>IDENTIFICATION BY MASS SPECTROMETRY [LARGE SCALE ANALYSIS]</scope>
    <source>
        <tissue>Brain</tissue>
        <tissue>Heart</tissue>
        <tissue>Kidney</tissue>
        <tissue>Liver</tissue>
        <tissue>Lung</tissue>
        <tissue>Pancreas</tissue>
        <tissue>Spleen</tissue>
        <tissue>Testis</tissue>
    </source>
</reference>
<reference key="3">
    <citation type="journal article" date="2023" name="Biochem. Biophys. Res. Commun.">
        <title>The UFMylated ribosome-recognition protein SAYSD1 is predominantly expressed in spermatids but is dispensable for fertility in mice.</title>
        <authorList>
            <person name="Chang L."/>
            <person name="Fujii W."/>
            <person name="Yogo K."/>
        </authorList>
    </citation>
    <scope>SUBCELLULAR LOCATION</scope>
    <scope>TISSUE SPECIFICITY</scope>
    <scope>DISRUPTION PHENOTYPE</scope>
</reference>
<sequence length="188" mass="20704">MEQRLAEFREARKRASLVAQPSTSSQSVQTSGAKAEPAAATPKTATGWLTRFLKRKANPAIAQAQPNQPQEAGQQLPESTAVPLPSSCRQSFLTNITFLKVLLWLVLLGLFVELEFGLAYFVLSMFYWMYVGTRGPEEKKEGEKSAYSVFNPGCEAIQGTLTAEQLEQELQLRPPQGSRTSPSCSSYP</sequence>
<keyword id="KW-0968">Cytoplasmic vesicle</keyword>
<keyword id="KW-0256">Endoplasmic reticulum</keyword>
<keyword id="KW-0472">Membrane</keyword>
<keyword id="KW-1185">Reference proteome</keyword>
<comment type="function">
    <text evidence="1">Ufmylation 'reader' component of a translocation-associated quality control pathway, a mechanism that takes place when a ribosome has stalled during translation, and which is required to degrade clogged substrates (By similarity). Specifically recognizes and binds ufmylated ribosomes when a ribosome has stalled, promoting the transport of stalled nascent chain via the TRAPP complex to lysosomes for degradation (By similarity).</text>
</comment>
<comment type="subunit">
    <text evidence="1">Associates (via N-terminus) with ribosomes.</text>
</comment>
<comment type="subcellular location">
    <subcellularLocation>
        <location evidence="3">Endoplasmic reticulum membrane</location>
    </subcellularLocation>
    <subcellularLocation>
        <location evidence="1">Cytoplasmic vesicle membrane</location>
    </subcellularLocation>
</comment>
<comment type="tissue specificity">
    <text evidence="3">Enriched in testis; predominantly expressed in round and elongating spermatids.</text>
</comment>
<comment type="domain">
    <text evidence="1">The middle helical (MH) region recognizes and binds ufmylated ribosomes.</text>
</comment>
<comment type="disruption phenotype">
    <text evidence="3">No visible phenotype; mice are fertile, with no differences in sperm morphology or motility, although the cauda epididymis contains slightly less sperm.</text>
</comment>
<comment type="similarity">
    <text evidence="5">Belongs to the SAYSD1 family.</text>
</comment>
<name>SAYS1_MOUSE</name>
<organism>
    <name type="scientific">Mus musculus</name>
    <name type="common">Mouse</name>
    <dbReference type="NCBI Taxonomy" id="10090"/>
    <lineage>
        <taxon>Eukaryota</taxon>
        <taxon>Metazoa</taxon>
        <taxon>Chordata</taxon>
        <taxon>Craniata</taxon>
        <taxon>Vertebrata</taxon>
        <taxon>Euteleostomi</taxon>
        <taxon>Mammalia</taxon>
        <taxon>Eutheria</taxon>
        <taxon>Euarchontoglires</taxon>
        <taxon>Glires</taxon>
        <taxon>Rodentia</taxon>
        <taxon>Myomorpha</taxon>
        <taxon>Muroidea</taxon>
        <taxon>Muridae</taxon>
        <taxon>Murinae</taxon>
        <taxon>Mus</taxon>
        <taxon>Mus</taxon>
    </lineage>
</organism>
<proteinExistence type="evidence at protein level"/>
<feature type="chain" id="PRO_0000089518" description="SAYSvFN domain-containing protein 1">
    <location>
        <begin position="1"/>
        <end position="188"/>
    </location>
</feature>
<feature type="topological domain" description="Cytoplasmic" evidence="1">
    <location>
        <begin position="1"/>
        <end position="100"/>
    </location>
</feature>
<feature type="intramembrane region" description="Helical" evidence="1">
    <location>
        <begin position="101"/>
        <end position="121"/>
    </location>
</feature>
<feature type="topological domain" description="Cytoplasmic" evidence="1">
    <location>
        <begin position="122"/>
        <end position="188"/>
    </location>
</feature>
<feature type="region of interest" description="Disordered" evidence="2">
    <location>
        <begin position="1"/>
        <end position="43"/>
    </location>
</feature>
<feature type="region of interest" description="Disordered" evidence="2">
    <location>
        <begin position="60"/>
        <end position="80"/>
    </location>
</feature>
<feature type="region of interest" description="Middle helical (MH)" evidence="1">
    <location>
        <begin position="86"/>
        <end position="100"/>
    </location>
</feature>
<feature type="compositionally biased region" description="Basic and acidic residues" evidence="2">
    <location>
        <begin position="1"/>
        <end position="10"/>
    </location>
</feature>
<feature type="compositionally biased region" description="Low complexity" evidence="2">
    <location>
        <begin position="22"/>
        <end position="43"/>
    </location>
</feature>
<feature type="compositionally biased region" description="Low complexity" evidence="2">
    <location>
        <begin position="60"/>
        <end position="75"/>
    </location>
</feature>
<protein>
    <recommendedName>
        <fullName evidence="5">SAYSvFN domain-containing protein 1</fullName>
    </recommendedName>
</protein>
<accession>Q8K190</accession>